<reference key="1">
    <citation type="journal article" date="2003" name="Genome Res.">
        <title>Genomic sequence and transcriptional profile of the boundary between pericentromeric satellites and genes on human chromosome arm 10p.</title>
        <authorList>
            <person name="Guy J."/>
            <person name="Hearn T."/>
            <person name="Crosier M."/>
            <person name="Mudge J."/>
            <person name="Viggiano L."/>
            <person name="Koczan D."/>
            <person name="Thiesen H.-J."/>
            <person name="Bailey J.A."/>
            <person name="Horvath J.E."/>
            <person name="Eichler E.E."/>
            <person name="Earthrowl M.E."/>
            <person name="Deloukas P."/>
            <person name="French L."/>
            <person name="Rogers J."/>
            <person name="Bentley D."/>
            <person name="Jackson M.S."/>
        </authorList>
    </citation>
    <scope>NUCLEOTIDE SEQUENCE [MRNA]</scope>
</reference>
<reference key="2">
    <citation type="journal article" date="2004" name="Nat. Genet.">
        <title>Complete sequencing and characterization of 21,243 full-length human cDNAs.</title>
        <authorList>
            <person name="Ota T."/>
            <person name="Suzuki Y."/>
            <person name="Nishikawa T."/>
            <person name="Otsuki T."/>
            <person name="Sugiyama T."/>
            <person name="Irie R."/>
            <person name="Wakamatsu A."/>
            <person name="Hayashi K."/>
            <person name="Sato H."/>
            <person name="Nagai K."/>
            <person name="Kimura K."/>
            <person name="Makita H."/>
            <person name="Sekine M."/>
            <person name="Obayashi M."/>
            <person name="Nishi T."/>
            <person name="Shibahara T."/>
            <person name="Tanaka T."/>
            <person name="Ishii S."/>
            <person name="Yamamoto J."/>
            <person name="Saito K."/>
            <person name="Kawai Y."/>
            <person name="Isono Y."/>
            <person name="Nakamura Y."/>
            <person name="Nagahari K."/>
            <person name="Murakami K."/>
            <person name="Yasuda T."/>
            <person name="Iwayanagi T."/>
            <person name="Wagatsuma M."/>
            <person name="Shiratori A."/>
            <person name="Sudo H."/>
            <person name="Hosoiri T."/>
            <person name="Kaku Y."/>
            <person name="Kodaira H."/>
            <person name="Kondo H."/>
            <person name="Sugawara M."/>
            <person name="Takahashi M."/>
            <person name="Kanda K."/>
            <person name="Yokoi T."/>
            <person name="Furuya T."/>
            <person name="Kikkawa E."/>
            <person name="Omura Y."/>
            <person name="Abe K."/>
            <person name="Kamihara K."/>
            <person name="Katsuta N."/>
            <person name="Sato K."/>
            <person name="Tanikawa M."/>
            <person name="Yamazaki M."/>
            <person name="Ninomiya K."/>
            <person name="Ishibashi T."/>
            <person name="Yamashita H."/>
            <person name="Murakawa K."/>
            <person name="Fujimori K."/>
            <person name="Tanai H."/>
            <person name="Kimata M."/>
            <person name="Watanabe M."/>
            <person name="Hiraoka S."/>
            <person name="Chiba Y."/>
            <person name="Ishida S."/>
            <person name="Ono Y."/>
            <person name="Takiguchi S."/>
            <person name="Watanabe S."/>
            <person name="Yosida M."/>
            <person name="Hotuta T."/>
            <person name="Kusano J."/>
            <person name="Kanehori K."/>
            <person name="Takahashi-Fujii A."/>
            <person name="Hara H."/>
            <person name="Tanase T.-O."/>
            <person name="Nomura Y."/>
            <person name="Togiya S."/>
            <person name="Komai F."/>
            <person name="Hara R."/>
            <person name="Takeuchi K."/>
            <person name="Arita M."/>
            <person name="Imose N."/>
            <person name="Musashino K."/>
            <person name="Yuuki H."/>
            <person name="Oshima A."/>
            <person name="Sasaki N."/>
            <person name="Aotsuka S."/>
            <person name="Yoshikawa Y."/>
            <person name="Matsunawa H."/>
            <person name="Ichihara T."/>
            <person name="Shiohata N."/>
            <person name="Sano S."/>
            <person name="Moriya S."/>
            <person name="Momiyama H."/>
            <person name="Satoh N."/>
            <person name="Takami S."/>
            <person name="Terashima Y."/>
            <person name="Suzuki O."/>
            <person name="Nakagawa S."/>
            <person name="Senoh A."/>
            <person name="Mizoguchi H."/>
            <person name="Goto Y."/>
            <person name="Shimizu F."/>
            <person name="Wakebe H."/>
            <person name="Hishigaki H."/>
            <person name="Watanabe T."/>
            <person name="Sugiyama A."/>
            <person name="Takemoto M."/>
            <person name="Kawakami B."/>
            <person name="Yamazaki M."/>
            <person name="Watanabe K."/>
            <person name="Kumagai A."/>
            <person name="Itakura S."/>
            <person name="Fukuzumi Y."/>
            <person name="Fujimori Y."/>
            <person name="Komiyama M."/>
            <person name="Tashiro H."/>
            <person name="Tanigami A."/>
            <person name="Fujiwara T."/>
            <person name="Ono T."/>
            <person name="Yamada K."/>
            <person name="Fujii Y."/>
            <person name="Ozaki K."/>
            <person name="Hirao M."/>
            <person name="Ohmori Y."/>
            <person name="Kawabata A."/>
            <person name="Hikiji T."/>
            <person name="Kobatake N."/>
            <person name="Inagaki H."/>
            <person name="Ikema Y."/>
            <person name="Okamoto S."/>
            <person name="Okitani R."/>
            <person name="Kawakami T."/>
            <person name="Noguchi S."/>
            <person name="Itoh T."/>
            <person name="Shigeta K."/>
            <person name="Senba T."/>
            <person name="Matsumura K."/>
            <person name="Nakajima Y."/>
            <person name="Mizuno T."/>
            <person name="Morinaga M."/>
            <person name="Sasaki M."/>
            <person name="Togashi T."/>
            <person name="Oyama M."/>
            <person name="Hata H."/>
            <person name="Watanabe M."/>
            <person name="Komatsu T."/>
            <person name="Mizushima-Sugano J."/>
            <person name="Satoh T."/>
            <person name="Shirai Y."/>
            <person name="Takahashi Y."/>
            <person name="Nakagawa K."/>
            <person name="Okumura K."/>
            <person name="Nagase T."/>
            <person name="Nomura N."/>
            <person name="Kikuchi H."/>
            <person name="Masuho Y."/>
            <person name="Yamashita R."/>
            <person name="Nakai K."/>
            <person name="Yada T."/>
            <person name="Nakamura Y."/>
            <person name="Ohara O."/>
            <person name="Isogai T."/>
            <person name="Sugano S."/>
        </authorList>
    </citation>
    <scope>NUCLEOTIDE SEQUENCE [LARGE SCALE MRNA]</scope>
</reference>
<reference key="3">
    <citation type="journal article" date="2004" name="Nature">
        <title>The DNA sequence and comparative analysis of human chromosome 10.</title>
        <authorList>
            <person name="Deloukas P."/>
            <person name="Earthrowl M.E."/>
            <person name="Grafham D.V."/>
            <person name="Rubenfield M."/>
            <person name="French L."/>
            <person name="Steward C.A."/>
            <person name="Sims S.K."/>
            <person name="Jones M.C."/>
            <person name="Searle S."/>
            <person name="Scott C."/>
            <person name="Howe K."/>
            <person name="Hunt S.E."/>
            <person name="Andrews T.D."/>
            <person name="Gilbert J.G.R."/>
            <person name="Swarbreck D."/>
            <person name="Ashurst J.L."/>
            <person name="Taylor A."/>
            <person name="Battles J."/>
            <person name="Bird C.P."/>
            <person name="Ainscough R."/>
            <person name="Almeida J.P."/>
            <person name="Ashwell R.I.S."/>
            <person name="Ambrose K.D."/>
            <person name="Babbage A.K."/>
            <person name="Bagguley C.L."/>
            <person name="Bailey J."/>
            <person name="Banerjee R."/>
            <person name="Bates K."/>
            <person name="Beasley H."/>
            <person name="Bray-Allen S."/>
            <person name="Brown A.J."/>
            <person name="Brown J.Y."/>
            <person name="Burford D.C."/>
            <person name="Burrill W."/>
            <person name="Burton J."/>
            <person name="Cahill P."/>
            <person name="Camire D."/>
            <person name="Carter N.P."/>
            <person name="Chapman J.C."/>
            <person name="Clark S.Y."/>
            <person name="Clarke G."/>
            <person name="Clee C.M."/>
            <person name="Clegg S."/>
            <person name="Corby N."/>
            <person name="Coulson A."/>
            <person name="Dhami P."/>
            <person name="Dutta I."/>
            <person name="Dunn M."/>
            <person name="Faulkner L."/>
            <person name="Frankish A."/>
            <person name="Frankland J.A."/>
            <person name="Garner P."/>
            <person name="Garnett J."/>
            <person name="Gribble S."/>
            <person name="Griffiths C."/>
            <person name="Grocock R."/>
            <person name="Gustafson E."/>
            <person name="Hammond S."/>
            <person name="Harley J.L."/>
            <person name="Hart E."/>
            <person name="Heath P.D."/>
            <person name="Ho T.P."/>
            <person name="Hopkins B."/>
            <person name="Horne J."/>
            <person name="Howden P.J."/>
            <person name="Huckle E."/>
            <person name="Hynds C."/>
            <person name="Johnson C."/>
            <person name="Johnson D."/>
            <person name="Kana A."/>
            <person name="Kay M."/>
            <person name="Kimberley A.M."/>
            <person name="Kershaw J.K."/>
            <person name="Kokkinaki M."/>
            <person name="Laird G.K."/>
            <person name="Lawlor S."/>
            <person name="Lee H.M."/>
            <person name="Leongamornlert D.A."/>
            <person name="Laird G."/>
            <person name="Lloyd C."/>
            <person name="Lloyd D.M."/>
            <person name="Loveland J."/>
            <person name="Lovell J."/>
            <person name="McLaren S."/>
            <person name="McLay K.E."/>
            <person name="McMurray A."/>
            <person name="Mashreghi-Mohammadi M."/>
            <person name="Matthews L."/>
            <person name="Milne S."/>
            <person name="Nickerson T."/>
            <person name="Nguyen M."/>
            <person name="Overton-Larty E."/>
            <person name="Palmer S.A."/>
            <person name="Pearce A.V."/>
            <person name="Peck A.I."/>
            <person name="Pelan S."/>
            <person name="Phillimore B."/>
            <person name="Porter K."/>
            <person name="Rice C.M."/>
            <person name="Rogosin A."/>
            <person name="Ross M.T."/>
            <person name="Sarafidou T."/>
            <person name="Sehra H.K."/>
            <person name="Shownkeen R."/>
            <person name="Skuce C.D."/>
            <person name="Smith M."/>
            <person name="Standring L."/>
            <person name="Sycamore N."/>
            <person name="Tester J."/>
            <person name="Thorpe A."/>
            <person name="Torcasso W."/>
            <person name="Tracey A."/>
            <person name="Tromans A."/>
            <person name="Tsolas J."/>
            <person name="Wall M."/>
            <person name="Walsh J."/>
            <person name="Wang H."/>
            <person name="Weinstock K."/>
            <person name="West A.P."/>
            <person name="Willey D.L."/>
            <person name="Whitehead S.L."/>
            <person name="Wilming L."/>
            <person name="Wray P.W."/>
            <person name="Young L."/>
            <person name="Chen Y."/>
            <person name="Lovering R.C."/>
            <person name="Moschonas N.K."/>
            <person name="Siebert R."/>
            <person name="Fechtel K."/>
            <person name="Bentley D."/>
            <person name="Durbin R.M."/>
            <person name="Hubbard T."/>
            <person name="Doucette-Stamm L."/>
            <person name="Beck S."/>
            <person name="Smith D.R."/>
            <person name="Rogers J."/>
        </authorList>
    </citation>
    <scope>NUCLEOTIDE SEQUENCE [LARGE SCALE GENOMIC DNA]</scope>
</reference>
<reference key="4">
    <citation type="submission" date="2005-09" db="EMBL/GenBank/DDBJ databases">
        <authorList>
            <person name="Mural R.J."/>
            <person name="Istrail S."/>
            <person name="Sutton G.G."/>
            <person name="Florea L."/>
            <person name="Halpern A.L."/>
            <person name="Mobarry C.M."/>
            <person name="Lippert R."/>
            <person name="Walenz B."/>
            <person name="Shatkay H."/>
            <person name="Dew I."/>
            <person name="Miller J.R."/>
            <person name="Flanigan M.J."/>
            <person name="Edwards N.J."/>
            <person name="Bolanos R."/>
            <person name="Fasulo D."/>
            <person name="Halldorsson B.V."/>
            <person name="Hannenhalli S."/>
            <person name="Turner R."/>
            <person name="Yooseph S."/>
            <person name="Lu F."/>
            <person name="Nusskern D.R."/>
            <person name="Shue B.C."/>
            <person name="Zheng X.H."/>
            <person name="Zhong F."/>
            <person name="Delcher A.L."/>
            <person name="Huson D.H."/>
            <person name="Kravitz S.A."/>
            <person name="Mouchard L."/>
            <person name="Reinert K."/>
            <person name="Remington K.A."/>
            <person name="Clark A.G."/>
            <person name="Waterman M.S."/>
            <person name="Eichler E.E."/>
            <person name="Adams M.D."/>
            <person name="Hunkapiller M.W."/>
            <person name="Myers E.W."/>
            <person name="Venter J.C."/>
        </authorList>
    </citation>
    <scope>NUCLEOTIDE SEQUENCE [LARGE SCALE GENOMIC DNA]</scope>
</reference>
<reference key="5">
    <citation type="journal article" date="2004" name="Genome Res.">
        <title>The status, quality, and expansion of the NIH full-length cDNA project: the Mammalian Gene Collection (MGC).</title>
        <authorList>
            <consortium name="The MGC Project Team"/>
        </authorList>
    </citation>
    <scope>NUCLEOTIDE SEQUENCE [LARGE SCALE MRNA]</scope>
    <source>
        <tissue>Lung</tissue>
    </source>
</reference>
<reference key="6">
    <citation type="journal article" date="1993" name="Nucleic Acids Res.">
        <title>Duplicated KOX zinc finger gene clusters flank the centromere of human chromosome 10: evidence for a pericentric inversion during primate evolution.</title>
        <authorList>
            <person name="Tunnacliffe A."/>
            <person name="Liu L."/>
            <person name="Moore J.K."/>
            <person name="Leversha M.A."/>
            <person name="Jackson M.S."/>
            <person name="Ferguson-Smith M.A."/>
            <person name="Thiesen H.-J."/>
            <person name="Ponder B.A."/>
        </authorList>
    </citation>
    <scope>NUCLEOTIDE SEQUENCE [MRNA] OF 320-561</scope>
</reference>
<reference key="7">
    <citation type="journal article" date="1990" name="New Biol.">
        <title>Multiple genes encoding zinc finger domains are expressed in human T cells.</title>
        <authorList>
            <person name="Thiesen H.-J."/>
        </authorList>
    </citation>
    <scope>NUCLEOTIDE SEQUENCE [MRNA] OF 327-382</scope>
    <source>
        <tissue>Lymphoid tissue</tissue>
    </source>
</reference>
<reference key="8">
    <citation type="journal article" date="2013" name="Hum. Mol. Genet.">
        <title>A defective Krab-domain zinc-finger transcription factor contributes to altered myogenesis in myotonic dystrophy type 1.</title>
        <authorList>
            <person name="Gauthier M."/>
            <person name="Marteyn A."/>
            <person name="Denis J.A."/>
            <person name="Cailleret M."/>
            <person name="Giraud-Triboult K."/>
            <person name="Aubert S."/>
            <person name="Lecuyer C."/>
            <person name="Marie J."/>
            <person name="Furling D."/>
            <person name="Vernet R."/>
            <person name="Yanguas C."/>
            <person name="Baldeschi C."/>
            <person name="Pietu G."/>
            <person name="Peschanski M."/>
            <person name="Martinat C."/>
        </authorList>
    </citation>
    <scope>INDUCTION</scope>
    <scope>SUBCELLULAR LOCATION</scope>
</reference>
<comment type="function">
    <text>May be involved in transcriptional regulation.</text>
</comment>
<comment type="subcellular location">
    <subcellularLocation>
        <location evidence="3">Nucleus</location>
    </subcellularLocation>
</comment>
<comment type="induction">
    <text evidence="3">Down-regulated in cells with DM1 (Myotonic dystrophy type 1) mutation, via a mechanism that involves abnormal control of its mRNA stability by CUGBP1.</text>
</comment>
<comment type="similarity">
    <text evidence="4">Belongs to the krueppel C2H2-type zinc-finger protein family.</text>
</comment>
<evidence type="ECO:0000255" key="1">
    <source>
        <dbReference type="PROSITE-ProRule" id="PRU00042"/>
    </source>
</evidence>
<evidence type="ECO:0000255" key="2">
    <source>
        <dbReference type="PROSITE-ProRule" id="PRU00119"/>
    </source>
</evidence>
<evidence type="ECO:0000269" key="3">
    <source>
    </source>
</evidence>
<evidence type="ECO:0000305" key="4"/>
<sequence>MITSQGSVSFRDVTVGFTQEEWQHLDPAQRTLYRDVMLENYSHLVSVGYCIPKPEVILKLEKGEEPWILEEKFPSQSHLELINTSRNYSIMKFNEFNKGGKCFCDEKHEIIHSEEEPSEYNKNGNSFWLNEDLIWHQKIKNWEQSFEYNECGKAFPENSLFLVHKRGYTGQKTCKYTEHGKTCDMSFFITHQQTHPRENHYGNECGENIFEESILLEHQSVYPFSQKLNLTPIQRTHSINNIIEYNECGTFFSEKLVLHLQQRTHTGEKPYECHECGKTFTQKSAHTRHQRTHTGGKPYECHECGKTFYKNSDLIKHQRIHTGERPYGCHECGKSFSEKSTLTQHQRTHTGEKPYECHECGKTFSFKSVLTVHQKTHTGEKPYECYACGKAFLRKSDLIKHQRIHTGEKPYECNECGKSFSEKSTLTKHLRTHTGEKPYECIQCGKFFCYYSGFTEHLRRHTGEKPFGCNECGKTFRQKSALIVHQRTHIRQKPYGCNQCGKSFCVKSKLIAHHRTHTGEKPYECNVCGKSFYVKSKLTVHQRIHLGRNPINVVNEGNYSG</sequence>
<name>ZN37A_HUMAN</name>
<protein>
    <recommendedName>
        <fullName>Zinc finger protein 37A</fullName>
    </recommendedName>
    <alternativeName>
        <fullName>Zinc finger protein KOX21</fullName>
    </alternativeName>
</protein>
<organism>
    <name type="scientific">Homo sapiens</name>
    <name type="common">Human</name>
    <dbReference type="NCBI Taxonomy" id="9606"/>
    <lineage>
        <taxon>Eukaryota</taxon>
        <taxon>Metazoa</taxon>
        <taxon>Chordata</taxon>
        <taxon>Craniata</taxon>
        <taxon>Vertebrata</taxon>
        <taxon>Euteleostomi</taxon>
        <taxon>Mammalia</taxon>
        <taxon>Eutheria</taxon>
        <taxon>Euarchontoglires</taxon>
        <taxon>Primates</taxon>
        <taxon>Haplorrhini</taxon>
        <taxon>Catarrhini</taxon>
        <taxon>Hominidae</taxon>
        <taxon>Homo</taxon>
    </lineage>
</organism>
<dbReference type="EMBL" id="AJ492195">
    <property type="protein sequence ID" value="CAD37331.1"/>
    <property type="molecule type" value="mRNA"/>
</dbReference>
<dbReference type="EMBL" id="AK092012">
    <property type="protein sequence ID" value="BAG52465.1"/>
    <property type="molecule type" value="mRNA"/>
</dbReference>
<dbReference type="EMBL" id="AL117339">
    <property type="status" value="NOT_ANNOTATED_CDS"/>
    <property type="molecule type" value="Genomic_DNA"/>
</dbReference>
<dbReference type="EMBL" id="CH471072">
    <property type="protein sequence ID" value="EAW85885.1"/>
    <property type="molecule type" value="Genomic_DNA"/>
</dbReference>
<dbReference type="EMBL" id="CH471072">
    <property type="protein sequence ID" value="EAW85886.1"/>
    <property type="molecule type" value="Genomic_DNA"/>
</dbReference>
<dbReference type="EMBL" id="BC015858">
    <property type="protein sequence ID" value="AAH15858.1"/>
    <property type="molecule type" value="mRNA"/>
</dbReference>
<dbReference type="EMBL" id="X69115">
    <property type="protein sequence ID" value="CAA48868.1"/>
    <property type="molecule type" value="mRNA"/>
</dbReference>
<dbReference type="EMBL" id="X52352">
    <property type="protein sequence ID" value="CAA36578.1"/>
    <property type="molecule type" value="mRNA"/>
</dbReference>
<dbReference type="CCDS" id="CCDS31183.1"/>
<dbReference type="PIR" id="S30238">
    <property type="entry name" value="S30238"/>
</dbReference>
<dbReference type="RefSeq" id="NP_001007095.1">
    <property type="nucleotide sequence ID" value="NM_001007094.4"/>
</dbReference>
<dbReference type="RefSeq" id="NP_001171572.1">
    <property type="nucleotide sequence ID" value="NM_001178101.3"/>
</dbReference>
<dbReference type="RefSeq" id="NP_001311174.1">
    <property type="nucleotide sequence ID" value="NM_001324245.3"/>
</dbReference>
<dbReference type="RefSeq" id="NP_001311175.1">
    <property type="nucleotide sequence ID" value="NM_001324246.3"/>
</dbReference>
<dbReference type="RefSeq" id="NP_001311176.1">
    <property type="nucleotide sequence ID" value="NM_001324247.3"/>
</dbReference>
<dbReference type="RefSeq" id="NP_001311177.1">
    <property type="nucleotide sequence ID" value="NM_001324248.3"/>
</dbReference>
<dbReference type="RefSeq" id="NP_001311178.1">
    <property type="nucleotide sequence ID" value="NM_001324249.3"/>
</dbReference>
<dbReference type="RefSeq" id="NP_001311179.1">
    <property type="nucleotide sequence ID" value="NM_001324250.3"/>
</dbReference>
<dbReference type="RefSeq" id="NP_001311180.1">
    <property type="nucleotide sequence ID" value="NM_001324251.3"/>
</dbReference>
<dbReference type="RefSeq" id="NP_003412.1">
    <property type="nucleotide sequence ID" value="NM_003421.4"/>
</dbReference>
<dbReference type="RefSeq" id="XP_011517958.1">
    <property type="nucleotide sequence ID" value="XM_011519656.3"/>
</dbReference>
<dbReference type="RefSeq" id="XP_011517959.1">
    <property type="nucleotide sequence ID" value="XM_011519657.3"/>
</dbReference>
<dbReference type="RefSeq" id="XP_011517960.1">
    <property type="nucleotide sequence ID" value="XM_011519658.4"/>
</dbReference>
<dbReference type="RefSeq" id="XP_047281678.1">
    <property type="nucleotide sequence ID" value="XM_047425722.1"/>
</dbReference>
<dbReference type="RefSeq" id="XP_054222670.1">
    <property type="nucleotide sequence ID" value="XM_054366695.1"/>
</dbReference>
<dbReference type="RefSeq" id="XP_054222671.1">
    <property type="nucleotide sequence ID" value="XM_054366696.1"/>
</dbReference>
<dbReference type="RefSeq" id="XP_054222672.1">
    <property type="nucleotide sequence ID" value="XM_054366697.1"/>
</dbReference>
<dbReference type="RefSeq" id="XP_054222673.1">
    <property type="nucleotide sequence ID" value="XM_054366698.1"/>
</dbReference>
<dbReference type="SMR" id="P17032"/>
<dbReference type="BioGRID" id="113415">
    <property type="interactions" value="4"/>
</dbReference>
<dbReference type="FunCoup" id="P17032">
    <property type="interactions" value="760"/>
</dbReference>
<dbReference type="IntAct" id="P17032">
    <property type="interactions" value="2"/>
</dbReference>
<dbReference type="STRING" id="9606.ENSP00000354377"/>
<dbReference type="iPTMnet" id="P17032"/>
<dbReference type="PhosphoSitePlus" id="P17032"/>
<dbReference type="BioMuta" id="ZNF37A"/>
<dbReference type="DMDM" id="85681861"/>
<dbReference type="jPOST" id="P17032"/>
<dbReference type="MassIVE" id="P17032"/>
<dbReference type="PaxDb" id="9606-ENSP00000354377"/>
<dbReference type="PeptideAtlas" id="P17032"/>
<dbReference type="ProteomicsDB" id="53435"/>
<dbReference type="Antibodypedia" id="823">
    <property type="antibodies" value="171 antibodies from 23 providers"/>
</dbReference>
<dbReference type="DNASU" id="7587"/>
<dbReference type="Ensembl" id="ENST00000351773.7">
    <property type="protein sequence ID" value="ENSP00000329141.3"/>
    <property type="gene ID" value="ENSG00000075407.19"/>
</dbReference>
<dbReference type="Ensembl" id="ENST00000361085.9">
    <property type="protein sequence ID" value="ENSP00000354377.4"/>
    <property type="gene ID" value="ENSG00000075407.19"/>
</dbReference>
<dbReference type="Ensembl" id="ENST00000685332.1">
    <property type="protein sequence ID" value="ENSP00000508865.1"/>
    <property type="gene ID" value="ENSG00000075407.19"/>
</dbReference>
<dbReference type="GeneID" id="7587"/>
<dbReference type="KEGG" id="hsa:7587"/>
<dbReference type="MANE-Select" id="ENST00000685332.1">
    <property type="protein sequence ID" value="ENSP00000508865.1"/>
    <property type="RefSeq nucleotide sequence ID" value="NM_001324250.3"/>
    <property type="RefSeq protein sequence ID" value="NP_001311179.1"/>
</dbReference>
<dbReference type="UCSC" id="uc001izk.4">
    <property type="organism name" value="human"/>
</dbReference>
<dbReference type="AGR" id="HGNC:13102"/>
<dbReference type="CTD" id="7587"/>
<dbReference type="DisGeNET" id="7587"/>
<dbReference type="GeneCards" id="ZNF37A"/>
<dbReference type="HGNC" id="HGNC:13102">
    <property type="gene designation" value="ZNF37A"/>
</dbReference>
<dbReference type="HPA" id="ENSG00000075407">
    <property type="expression patterns" value="Low tissue specificity"/>
</dbReference>
<dbReference type="MIM" id="616085">
    <property type="type" value="gene"/>
</dbReference>
<dbReference type="neXtProt" id="NX_P17032"/>
<dbReference type="OpenTargets" id="ENSG00000075407"/>
<dbReference type="PharmGKB" id="PA37677"/>
<dbReference type="VEuPathDB" id="HostDB:ENSG00000075407"/>
<dbReference type="eggNOG" id="KOG1721">
    <property type="taxonomic scope" value="Eukaryota"/>
</dbReference>
<dbReference type="GeneTree" id="ENSGT00940000162764"/>
<dbReference type="HOGENOM" id="CLU_002678_0_12_1"/>
<dbReference type="InParanoid" id="P17032"/>
<dbReference type="OMA" id="KNTCEYS"/>
<dbReference type="OrthoDB" id="9831975at2759"/>
<dbReference type="PAN-GO" id="P17032">
    <property type="GO annotations" value="4 GO annotations based on evolutionary models"/>
</dbReference>
<dbReference type="PhylomeDB" id="P17032"/>
<dbReference type="TreeFam" id="TF337898"/>
<dbReference type="PathwayCommons" id="P17032"/>
<dbReference type="Reactome" id="R-HSA-212436">
    <property type="pathway name" value="Generic Transcription Pathway"/>
</dbReference>
<dbReference type="SignaLink" id="P17032"/>
<dbReference type="BioGRID-ORCS" id="7587">
    <property type="hits" value="16 hits in 1173 CRISPR screens"/>
</dbReference>
<dbReference type="ChiTaRS" id="ZNF37A">
    <property type="organism name" value="human"/>
</dbReference>
<dbReference type="GeneWiki" id="ZNF37A"/>
<dbReference type="GenomeRNAi" id="7587"/>
<dbReference type="Pharos" id="P17032">
    <property type="development level" value="Tdark"/>
</dbReference>
<dbReference type="PRO" id="PR:P17032"/>
<dbReference type="Proteomes" id="UP000005640">
    <property type="component" value="Chromosome 10"/>
</dbReference>
<dbReference type="RNAct" id="P17032">
    <property type="molecule type" value="protein"/>
</dbReference>
<dbReference type="Bgee" id="ENSG00000075407">
    <property type="expression patterns" value="Expressed in parotid gland and 178 other cell types or tissues"/>
</dbReference>
<dbReference type="ExpressionAtlas" id="P17032">
    <property type="expression patterns" value="baseline and differential"/>
</dbReference>
<dbReference type="GO" id="GO:0005634">
    <property type="term" value="C:nucleus"/>
    <property type="evidence" value="ECO:0000314"/>
    <property type="project" value="UniProtKB"/>
</dbReference>
<dbReference type="GO" id="GO:0003700">
    <property type="term" value="F:DNA-binding transcription factor activity"/>
    <property type="evidence" value="ECO:0000303"/>
    <property type="project" value="UniProtKB"/>
</dbReference>
<dbReference type="GO" id="GO:0000981">
    <property type="term" value="F:DNA-binding transcription factor activity, RNA polymerase II-specific"/>
    <property type="evidence" value="ECO:0000318"/>
    <property type="project" value="GO_Central"/>
</dbReference>
<dbReference type="GO" id="GO:0000978">
    <property type="term" value="F:RNA polymerase II cis-regulatory region sequence-specific DNA binding"/>
    <property type="evidence" value="ECO:0000318"/>
    <property type="project" value="GO_Central"/>
</dbReference>
<dbReference type="GO" id="GO:0008270">
    <property type="term" value="F:zinc ion binding"/>
    <property type="evidence" value="ECO:0007669"/>
    <property type="project" value="UniProtKB-KW"/>
</dbReference>
<dbReference type="GO" id="GO:0006355">
    <property type="term" value="P:regulation of DNA-templated transcription"/>
    <property type="evidence" value="ECO:0000303"/>
    <property type="project" value="UniProtKB"/>
</dbReference>
<dbReference type="GO" id="GO:0006357">
    <property type="term" value="P:regulation of transcription by RNA polymerase II"/>
    <property type="evidence" value="ECO:0000318"/>
    <property type="project" value="GO_Central"/>
</dbReference>
<dbReference type="CDD" id="cd07765">
    <property type="entry name" value="KRAB_A-box"/>
    <property type="match status" value="1"/>
</dbReference>
<dbReference type="FunFam" id="3.30.160.60:FF:000295">
    <property type="entry name" value="zinc finger protein 19"/>
    <property type="match status" value="1"/>
</dbReference>
<dbReference type="FunFam" id="3.30.160.60:FF:000128">
    <property type="entry name" value="zinc finger protein 268 isoform X1"/>
    <property type="match status" value="1"/>
</dbReference>
<dbReference type="FunFam" id="3.30.160.60:FF:000352">
    <property type="entry name" value="zinc finger protein 3 homolog"/>
    <property type="match status" value="1"/>
</dbReference>
<dbReference type="FunFam" id="3.30.160.60:FF:002343">
    <property type="entry name" value="Zinc finger protein 33A"/>
    <property type="match status" value="2"/>
</dbReference>
<dbReference type="FunFam" id="3.30.160.60:FF:001498">
    <property type="entry name" value="Zinc finger protein 404"/>
    <property type="match status" value="1"/>
</dbReference>
<dbReference type="FunFam" id="3.30.160.60:FF:000829">
    <property type="entry name" value="zinc finger protein 510"/>
    <property type="match status" value="1"/>
</dbReference>
<dbReference type="FunFam" id="3.30.160.60:FF:002254">
    <property type="entry name" value="Zinc finger protein 540"/>
    <property type="match status" value="2"/>
</dbReference>
<dbReference type="FunFam" id="3.30.160.60:FF:000320">
    <property type="entry name" value="Zinc finger protein 777"/>
    <property type="match status" value="1"/>
</dbReference>
<dbReference type="Gene3D" id="6.10.140.140">
    <property type="match status" value="1"/>
</dbReference>
<dbReference type="Gene3D" id="3.30.160.60">
    <property type="entry name" value="Classic Zinc Finger"/>
    <property type="match status" value="12"/>
</dbReference>
<dbReference type="InterPro" id="IPR001909">
    <property type="entry name" value="KRAB"/>
</dbReference>
<dbReference type="InterPro" id="IPR036051">
    <property type="entry name" value="KRAB_dom_sf"/>
</dbReference>
<dbReference type="InterPro" id="IPR036236">
    <property type="entry name" value="Znf_C2H2_sf"/>
</dbReference>
<dbReference type="InterPro" id="IPR013087">
    <property type="entry name" value="Znf_C2H2_type"/>
</dbReference>
<dbReference type="PANTHER" id="PTHR24393">
    <property type="entry name" value="ZINC FINGER PROTEIN"/>
    <property type="match status" value="1"/>
</dbReference>
<dbReference type="PANTHER" id="PTHR24393:SF159">
    <property type="entry name" value="ZINC FINGER PROTEIN 345-RELATED"/>
    <property type="match status" value="1"/>
</dbReference>
<dbReference type="Pfam" id="PF01352">
    <property type="entry name" value="KRAB"/>
    <property type="match status" value="1"/>
</dbReference>
<dbReference type="Pfam" id="PF00096">
    <property type="entry name" value="zf-C2H2"/>
    <property type="match status" value="9"/>
</dbReference>
<dbReference type="SMART" id="SM00349">
    <property type="entry name" value="KRAB"/>
    <property type="match status" value="1"/>
</dbReference>
<dbReference type="SMART" id="SM00355">
    <property type="entry name" value="ZnF_C2H2"/>
    <property type="match status" value="10"/>
</dbReference>
<dbReference type="SUPFAM" id="SSF57667">
    <property type="entry name" value="beta-beta-alpha zinc fingers"/>
    <property type="match status" value="7"/>
</dbReference>
<dbReference type="SUPFAM" id="SSF109640">
    <property type="entry name" value="KRAB domain (Kruppel-associated box)"/>
    <property type="match status" value="1"/>
</dbReference>
<dbReference type="PROSITE" id="PS50805">
    <property type="entry name" value="KRAB"/>
    <property type="match status" value="1"/>
</dbReference>
<dbReference type="PROSITE" id="PS00028">
    <property type="entry name" value="ZINC_FINGER_C2H2_1"/>
    <property type="match status" value="10"/>
</dbReference>
<dbReference type="PROSITE" id="PS50157">
    <property type="entry name" value="ZINC_FINGER_C2H2_2"/>
    <property type="match status" value="12"/>
</dbReference>
<gene>
    <name type="primary">ZNF37A</name>
    <name type="synonym">KOX21</name>
    <name type="synonym">ZNF37</name>
</gene>
<keyword id="KW-0238">DNA-binding</keyword>
<keyword id="KW-0479">Metal-binding</keyword>
<keyword id="KW-0539">Nucleus</keyword>
<keyword id="KW-1267">Proteomics identification</keyword>
<keyword id="KW-1185">Reference proteome</keyword>
<keyword id="KW-0677">Repeat</keyword>
<keyword id="KW-0804">Transcription</keyword>
<keyword id="KW-0805">Transcription regulation</keyword>
<keyword id="KW-0862">Zinc</keyword>
<keyword id="KW-0863">Zinc-finger</keyword>
<feature type="chain" id="PRO_0000047367" description="Zinc finger protein 37A">
    <location>
        <begin position="1"/>
        <end position="561"/>
    </location>
</feature>
<feature type="domain" description="KRAB" evidence="2">
    <location>
        <begin position="8"/>
        <end position="79"/>
    </location>
</feature>
<feature type="zinc finger region" description="C2H2-type 1; degenerate" evidence="1">
    <location>
        <begin position="146"/>
        <end position="168"/>
    </location>
</feature>
<feature type="zinc finger region" description="C2H2-type 2; degenerate" evidence="1">
    <location>
        <begin position="243"/>
        <end position="265"/>
    </location>
</feature>
<feature type="zinc finger region" description="C2H2-type 3" evidence="1">
    <location>
        <begin position="271"/>
        <end position="293"/>
    </location>
</feature>
<feature type="zinc finger region" description="C2H2-type 4" evidence="1">
    <location>
        <begin position="299"/>
        <end position="321"/>
    </location>
</feature>
<feature type="zinc finger region" description="C2H2-type 5" evidence="1">
    <location>
        <begin position="327"/>
        <end position="349"/>
    </location>
</feature>
<feature type="zinc finger region" description="C2H2-type 6" evidence="1">
    <location>
        <begin position="355"/>
        <end position="377"/>
    </location>
</feature>
<feature type="zinc finger region" description="C2H2-type 7" evidence="1">
    <location>
        <begin position="383"/>
        <end position="405"/>
    </location>
</feature>
<feature type="zinc finger region" description="C2H2-type 8" evidence="1">
    <location>
        <begin position="411"/>
        <end position="433"/>
    </location>
</feature>
<feature type="zinc finger region" description="C2H2-type 9" evidence="1">
    <location>
        <begin position="439"/>
        <end position="461"/>
    </location>
</feature>
<feature type="zinc finger region" description="C2H2-type 10" evidence="1">
    <location>
        <begin position="467"/>
        <end position="489"/>
    </location>
</feature>
<feature type="zinc finger region" description="C2H2-type 11" evidence="1">
    <location>
        <begin position="495"/>
        <end position="517"/>
    </location>
</feature>
<feature type="zinc finger region" description="C2H2-type 12" evidence="1">
    <location>
        <begin position="523"/>
        <end position="545"/>
    </location>
</feature>
<feature type="sequence variant" id="VAR_052753" description="In dbSNP:rs2021319.">
    <original>D</original>
    <variation>N</variation>
    <location>
        <position position="105"/>
    </location>
</feature>
<proteinExistence type="evidence at protein level"/>
<accession>P17032</accession>
<accession>B3KRQ3</accession>
<accession>D3DRZ3</accession>
<accession>Q96B88</accession>